<comment type="function">
    <text evidence="1">Plays a role in virus cell tropism, and may be required for efficient virus replication in macrophages.</text>
</comment>
<comment type="induction">
    <text evidence="2">Expressed in the late phase of the viral replicative cycle.</text>
</comment>
<comment type="similarity">
    <text evidence="2">Belongs to the asfivirus MGF 505 family.</text>
</comment>
<organism>
    <name type="scientific">African swine fever virus (isolate Warthog/Namibia/Wart80/1980)</name>
    <name type="common">ASFV</name>
    <dbReference type="NCBI Taxonomy" id="561444"/>
    <lineage>
        <taxon>Viruses</taxon>
        <taxon>Varidnaviria</taxon>
        <taxon>Bamfordvirae</taxon>
        <taxon>Nucleocytoviricota</taxon>
        <taxon>Pokkesviricetes</taxon>
        <taxon>Asfuvirales</taxon>
        <taxon>Asfarviridae</taxon>
        <taxon>Asfivirus</taxon>
        <taxon>African swine fever virus</taxon>
    </lineage>
</organism>
<protein>
    <recommendedName>
        <fullName>Protein MGF 505-2R</fullName>
    </recommendedName>
</protein>
<name>5052R_ASFWA</name>
<sequence length="517" mass="61260">MFSLQDLCRKHLFILPDVFGEHVLQRLGLYWKCHGSLQRIGDDHILIRRDLILSTNEALRMAGEEGNNEVVKLLLLWKGNLHYAIIGALQGDQYDLIHKYENQIGDFHLILPLIQDAKTFEKCHALERFCGVSCLLKHATKYNMLPILQTYQEELSMRVYLRETLFELACLWQRYDVLKWIEQTMHVYDLKVMFNIAISKRDLTMYSLGYILLFDRENTEATLLTQHLEKTAAKGLLHFVLETLKYGGNIDIVLSQAVKYNHRKLLDYFLRQLPRKHIEKFLLLAVQEKASKKTLNLLLSHLNYSVKRIKKLLRYVIEYESTLVIKILLKKRVNLIDAMLEKMVRYFSATKVKTIMDELSISPERVIKMAIQKMRTDIVIHTSYIWEDDLERLTRLKDMVYTIKYEHGKKMLIKVMHGIYKNLLYDEREKVMFHLAKLYVAQNAATQFRDICKDCYRLDLARFKPRFKQLMLDCLEIVTKKSCYSILEILEKHIISLFTMKVMTEEEKNLCLEILYK</sequence>
<organismHost>
    <name type="scientific">Ornithodoros</name>
    <name type="common">relapsing fever ticks</name>
    <dbReference type="NCBI Taxonomy" id="6937"/>
</organismHost>
<organismHost>
    <name type="scientific">Phacochoerus aethiopicus</name>
    <name type="common">Warthog</name>
    <dbReference type="NCBI Taxonomy" id="85517"/>
</organismHost>
<organismHost>
    <name type="scientific">Phacochoerus africanus</name>
    <name type="common">Warthog</name>
    <dbReference type="NCBI Taxonomy" id="41426"/>
</organismHost>
<organismHost>
    <name type="scientific">Potamochoerus larvatus</name>
    <name type="common">Bushpig</name>
    <dbReference type="NCBI Taxonomy" id="273792"/>
</organismHost>
<organismHost>
    <name type="scientific">Sus scrofa</name>
    <name type="common">Pig</name>
    <dbReference type="NCBI Taxonomy" id="9823"/>
</organismHost>
<reference key="1">
    <citation type="submission" date="2003-03" db="EMBL/GenBank/DDBJ databases">
        <title>African swine fever virus genomes.</title>
        <authorList>
            <person name="Kutish G.F."/>
            <person name="Rock D.L."/>
        </authorList>
    </citation>
    <scope>NUCLEOTIDE SEQUENCE [LARGE SCALE GENOMIC DNA]</scope>
</reference>
<feature type="chain" id="PRO_0000373321" description="Protein MGF 505-2R">
    <location>
        <begin position="1"/>
        <end position="517"/>
    </location>
</feature>
<evidence type="ECO:0000250" key="1">
    <source>
        <dbReference type="UniProtKB" id="Q89702"/>
    </source>
</evidence>
<evidence type="ECO:0000305" key="2"/>
<accession>P0C9S9</accession>
<keyword id="KW-0426">Late protein</keyword>
<gene>
    <name type="ordered locus">War-036</name>
</gene>
<dbReference type="EMBL" id="AY261366">
    <property type="status" value="NOT_ANNOTATED_CDS"/>
    <property type="molecule type" value="Genomic_DNA"/>
</dbReference>
<dbReference type="SMR" id="P0C9S9"/>
<dbReference type="Proteomes" id="UP000000858">
    <property type="component" value="Segment"/>
</dbReference>
<dbReference type="InterPro" id="IPR004858">
    <property type="entry name" value="MGF_505"/>
</dbReference>
<dbReference type="Pfam" id="PF03158">
    <property type="entry name" value="DUF249"/>
    <property type="match status" value="1"/>
</dbReference>
<dbReference type="SUPFAM" id="SSF140860">
    <property type="entry name" value="Pseudo ankyrin repeat-like"/>
    <property type="match status" value="1"/>
</dbReference>
<proteinExistence type="inferred from homology"/>